<accession>Q5HSQ6</accession>
<proteinExistence type="inferred from homology"/>
<dbReference type="EC" id="2.7.1.24" evidence="1"/>
<dbReference type="EMBL" id="CP000025">
    <property type="protein sequence ID" value="AAW36131.1"/>
    <property type="molecule type" value="Genomic_DNA"/>
</dbReference>
<dbReference type="RefSeq" id="WP_002860686.1">
    <property type="nucleotide sequence ID" value="NC_003912.7"/>
</dbReference>
<dbReference type="SMR" id="Q5HSQ6"/>
<dbReference type="KEGG" id="cjr:CJE1701"/>
<dbReference type="HOGENOM" id="CLU_057180_0_0_7"/>
<dbReference type="UniPathway" id="UPA00241">
    <property type="reaction ID" value="UER00356"/>
</dbReference>
<dbReference type="GO" id="GO:0005737">
    <property type="term" value="C:cytoplasm"/>
    <property type="evidence" value="ECO:0007669"/>
    <property type="project" value="UniProtKB-SubCell"/>
</dbReference>
<dbReference type="GO" id="GO:0005524">
    <property type="term" value="F:ATP binding"/>
    <property type="evidence" value="ECO:0007669"/>
    <property type="project" value="UniProtKB-UniRule"/>
</dbReference>
<dbReference type="GO" id="GO:0004140">
    <property type="term" value="F:dephospho-CoA kinase activity"/>
    <property type="evidence" value="ECO:0007669"/>
    <property type="project" value="UniProtKB-UniRule"/>
</dbReference>
<dbReference type="GO" id="GO:0015937">
    <property type="term" value="P:coenzyme A biosynthetic process"/>
    <property type="evidence" value="ECO:0007669"/>
    <property type="project" value="UniProtKB-UniRule"/>
</dbReference>
<dbReference type="CDD" id="cd02022">
    <property type="entry name" value="DPCK"/>
    <property type="match status" value="1"/>
</dbReference>
<dbReference type="Gene3D" id="3.40.50.300">
    <property type="entry name" value="P-loop containing nucleotide triphosphate hydrolases"/>
    <property type="match status" value="1"/>
</dbReference>
<dbReference type="HAMAP" id="MF_00376">
    <property type="entry name" value="Dephospho_CoA_kinase"/>
    <property type="match status" value="1"/>
</dbReference>
<dbReference type="InterPro" id="IPR001977">
    <property type="entry name" value="Depp_CoAkinase"/>
</dbReference>
<dbReference type="InterPro" id="IPR027417">
    <property type="entry name" value="P-loop_NTPase"/>
</dbReference>
<dbReference type="NCBIfam" id="TIGR00152">
    <property type="entry name" value="dephospho-CoA kinase"/>
    <property type="match status" value="1"/>
</dbReference>
<dbReference type="PANTHER" id="PTHR10695:SF46">
    <property type="entry name" value="BIFUNCTIONAL COENZYME A SYNTHASE-RELATED"/>
    <property type="match status" value="1"/>
</dbReference>
<dbReference type="PANTHER" id="PTHR10695">
    <property type="entry name" value="DEPHOSPHO-COA KINASE-RELATED"/>
    <property type="match status" value="1"/>
</dbReference>
<dbReference type="Pfam" id="PF01121">
    <property type="entry name" value="CoaE"/>
    <property type="match status" value="1"/>
</dbReference>
<dbReference type="SUPFAM" id="SSF52540">
    <property type="entry name" value="P-loop containing nucleoside triphosphate hydrolases"/>
    <property type="match status" value="1"/>
</dbReference>
<dbReference type="PROSITE" id="PS51219">
    <property type="entry name" value="DPCK"/>
    <property type="match status" value="1"/>
</dbReference>
<sequence>MKNAFFVTASIACGKSTFIEIANSLGFKSISADKIAHKILDENALELEKIFSPFNLKNLLTKEKKIDRKILGEIVFNNKEAKKTLENFTHPKIRAKILEQMQILDKENKAFFVEIPLFFESGAYENLGKVIVIYTPKELSLKRIMQRDKLSLEAAKVRLDSQIDIEEKLKKADFIIKNTNSYVDFRQECVKVIQEISKGKM</sequence>
<name>COAE_CAMJR</name>
<evidence type="ECO:0000255" key="1">
    <source>
        <dbReference type="HAMAP-Rule" id="MF_00376"/>
    </source>
</evidence>
<comment type="function">
    <text evidence="1">Catalyzes the phosphorylation of the 3'-hydroxyl group of dephosphocoenzyme A to form coenzyme A.</text>
</comment>
<comment type="catalytic activity">
    <reaction evidence="1">
        <text>3'-dephospho-CoA + ATP = ADP + CoA + H(+)</text>
        <dbReference type="Rhea" id="RHEA:18245"/>
        <dbReference type="ChEBI" id="CHEBI:15378"/>
        <dbReference type="ChEBI" id="CHEBI:30616"/>
        <dbReference type="ChEBI" id="CHEBI:57287"/>
        <dbReference type="ChEBI" id="CHEBI:57328"/>
        <dbReference type="ChEBI" id="CHEBI:456216"/>
        <dbReference type="EC" id="2.7.1.24"/>
    </reaction>
</comment>
<comment type="pathway">
    <text evidence="1">Cofactor biosynthesis; coenzyme A biosynthesis; CoA from (R)-pantothenate: step 5/5.</text>
</comment>
<comment type="subcellular location">
    <subcellularLocation>
        <location evidence="1">Cytoplasm</location>
    </subcellularLocation>
</comment>
<comment type="similarity">
    <text evidence="1">Belongs to the CoaE family.</text>
</comment>
<organism>
    <name type="scientific">Campylobacter jejuni (strain RM1221)</name>
    <dbReference type="NCBI Taxonomy" id="195099"/>
    <lineage>
        <taxon>Bacteria</taxon>
        <taxon>Pseudomonadati</taxon>
        <taxon>Campylobacterota</taxon>
        <taxon>Epsilonproteobacteria</taxon>
        <taxon>Campylobacterales</taxon>
        <taxon>Campylobacteraceae</taxon>
        <taxon>Campylobacter</taxon>
    </lineage>
</organism>
<reference key="1">
    <citation type="journal article" date="2005" name="PLoS Biol.">
        <title>Major structural differences and novel potential virulence mechanisms from the genomes of multiple Campylobacter species.</title>
        <authorList>
            <person name="Fouts D.E."/>
            <person name="Mongodin E.F."/>
            <person name="Mandrell R.E."/>
            <person name="Miller W.G."/>
            <person name="Rasko D.A."/>
            <person name="Ravel J."/>
            <person name="Brinkac L.M."/>
            <person name="DeBoy R.T."/>
            <person name="Parker C.T."/>
            <person name="Daugherty S.C."/>
            <person name="Dodson R.J."/>
            <person name="Durkin A.S."/>
            <person name="Madupu R."/>
            <person name="Sullivan S.A."/>
            <person name="Shetty J.U."/>
            <person name="Ayodeji M.A."/>
            <person name="Shvartsbeyn A."/>
            <person name="Schatz M.C."/>
            <person name="Badger J.H."/>
            <person name="Fraser C.M."/>
            <person name="Nelson K.E."/>
        </authorList>
    </citation>
    <scope>NUCLEOTIDE SEQUENCE [LARGE SCALE GENOMIC DNA]</scope>
    <source>
        <strain>RM1221</strain>
    </source>
</reference>
<gene>
    <name evidence="1" type="primary">coaE</name>
    <name type="ordered locus">CJE1701</name>
</gene>
<feature type="chain" id="PRO_0000243271" description="Dephospho-CoA kinase">
    <location>
        <begin position="1"/>
        <end position="201"/>
    </location>
</feature>
<feature type="domain" description="DPCK" evidence="1">
    <location>
        <begin position="4"/>
        <end position="201"/>
    </location>
</feature>
<feature type="binding site" evidence="1">
    <location>
        <begin position="12"/>
        <end position="17"/>
    </location>
    <ligand>
        <name>ATP</name>
        <dbReference type="ChEBI" id="CHEBI:30616"/>
    </ligand>
</feature>
<protein>
    <recommendedName>
        <fullName evidence="1">Dephospho-CoA kinase</fullName>
        <ecNumber evidence="1">2.7.1.24</ecNumber>
    </recommendedName>
    <alternativeName>
        <fullName evidence="1">Dephosphocoenzyme A kinase</fullName>
    </alternativeName>
</protein>
<keyword id="KW-0067">ATP-binding</keyword>
<keyword id="KW-0173">Coenzyme A biosynthesis</keyword>
<keyword id="KW-0963">Cytoplasm</keyword>
<keyword id="KW-0418">Kinase</keyword>
<keyword id="KW-0547">Nucleotide-binding</keyword>
<keyword id="KW-0808">Transferase</keyword>